<evidence type="ECO:0000255" key="1">
    <source>
        <dbReference type="HAMAP-Rule" id="MF_00126"/>
    </source>
</evidence>
<accession>Q1LQ72</accession>
<sequence>MSHDTKPNDTPAASNFLRSIIDQDLATGTYAGRADKQGDPLPTVITRFPPEPNGYLHIGHAKSICVNFGLARDYAGRCHLRFDDTNPVKEDTEYVDSIIDAVHWLGFSWDSAQAGSTPHLYFASDYFDQLYKFAETLIERGVAYVDSQSAEQIAAMRGNFSEPGKPSPFRDRSVEENLKLFREMRDGKYADGEHVLRAKIDMTAPNIVMRDPVLYRIRHAHHHRTGDKWCIYPMYDFTHCISDAIENITHSLCTLEFENNRPLYDWVLEHLRDAGVFANPLPHQYEFARLNLTYAITSKRRLKQLVDEQRVTGWDDPRMPTIVGIRRRGYTPESIQLFCDRVGVSKADSWIDMSTLEGAVRDDLDARAPRSVAVLDPLKLILDNYPEGQSEECSAPVHPKQPEMGRRVFPLSRELWIEREDFNENPPKGYFRLFPGNKVRLRYGYVIECTGVDKDADGNVIAVHANYLPETKSGTPGADSVKVKGNIHWVSAPHACEAEVRLYDRLFNDPNPDAGGKNFLDALNPESKKVVTAYLEPGLRDAKPEDRFQFERHGYFVADRVDSQPGKPVFNRTVGLKDSWGK</sequence>
<comment type="catalytic activity">
    <reaction evidence="1">
        <text>tRNA(Gln) + L-glutamine + ATP = L-glutaminyl-tRNA(Gln) + AMP + diphosphate</text>
        <dbReference type="Rhea" id="RHEA:20121"/>
        <dbReference type="Rhea" id="RHEA-COMP:9662"/>
        <dbReference type="Rhea" id="RHEA-COMP:9681"/>
        <dbReference type="ChEBI" id="CHEBI:30616"/>
        <dbReference type="ChEBI" id="CHEBI:33019"/>
        <dbReference type="ChEBI" id="CHEBI:58359"/>
        <dbReference type="ChEBI" id="CHEBI:78442"/>
        <dbReference type="ChEBI" id="CHEBI:78521"/>
        <dbReference type="ChEBI" id="CHEBI:456215"/>
        <dbReference type="EC" id="6.1.1.18"/>
    </reaction>
</comment>
<comment type="subunit">
    <text evidence="1">Monomer.</text>
</comment>
<comment type="subcellular location">
    <subcellularLocation>
        <location evidence="1">Cytoplasm</location>
    </subcellularLocation>
</comment>
<comment type="similarity">
    <text evidence="1">Belongs to the class-I aminoacyl-tRNA synthetase family.</text>
</comment>
<gene>
    <name evidence="1" type="primary">glnS</name>
    <name type="ordered locus">Rmet_0818</name>
</gene>
<reference key="1">
    <citation type="journal article" date="2010" name="PLoS ONE">
        <title>The complete genome sequence of Cupriavidus metallidurans strain CH34, a master survivalist in harsh and anthropogenic environments.</title>
        <authorList>
            <person name="Janssen P.J."/>
            <person name="Van Houdt R."/>
            <person name="Moors H."/>
            <person name="Monsieurs P."/>
            <person name="Morin N."/>
            <person name="Michaux A."/>
            <person name="Benotmane M.A."/>
            <person name="Leys N."/>
            <person name="Vallaeys T."/>
            <person name="Lapidus A."/>
            <person name="Monchy S."/>
            <person name="Medigue C."/>
            <person name="Taghavi S."/>
            <person name="McCorkle S."/>
            <person name="Dunn J."/>
            <person name="van der Lelie D."/>
            <person name="Mergeay M."/>
        </authorList>
    </citation>
    <scope>NUCLEOTIDE SEQUENCE [LARGE SCALE GENOMIC DNA]</scope>
    <source>
        <strain>ATCC 43123 / DSM 2839 / NBRC 102507 / CH34</strain>
    </source>
</reference>
<name>SYQ_CUPMC</name>
<dbReference type="EC" id="6.1.1.18" evidence="1"/>
<dbReference type="EMBL" id="CP000352">
    <property type="protein sequence ID" value="ABF07704.1"/>
    <property type="molecule type" value="Genomic_DNA"/>
</dbReference>
<dbReference type="RefSeq" id="WP_011515648.1">
    <property type="nucleotide sequence ID" value="NC_007973.1"/>
</dbReference>
<dbReference type="SMR" id="Q1LQ72"/>
<dbReference type="STRING" id="266264.Rmet_0818"/>
<dbReference type="KEGG" id="rme:Rmet_0818"/>
<dbReference type="eggNOG" id="COG0008">
    <property type="taxonomic scope" value="Bacteria"/>
</dbReference>
<dbReference type="HOGENOM" id="CLU_001882_2_3_4"/>
<dbReference type="Proteomes" id="UP000002429">
    <property type="component" value="Chromosome"/>
</dbReference>
<dbReference type="GO" id="GO:0005829">
    <property type="term" value="C:cytosol"/>
    <property type="evidence" value="ECO:0007669"/>
    <property type="project" value="TreeGrafter"/>
</dbReference>
<dbReference type="GO" id="GO:0005524">
    <property type="term" value="F:ATP binding"/>
    <property type="evidence" value="ECO:0007669"/>
    <property type="project" value="UniProtKB-UniRule"/>
</dbReference>
<dbReference type="GO" id="GO:0004819">
    <property type="term" value="F:glutamine-tRNA ligase activity"/>
    <property type="evidence" value="ECO:0007669"/>
    <property type="project" value="UniProtKB-UniRule"/>
</dbReference>
<dbReference type="GO" id="GO:0006425">
    <property type="term" value="P:glutaminyl-tRNA aminoacylation"/>
    <property type="evidence" value="ECO:0007669"/>
    <property type="project" value="InterPro"/>
</dbReference>
<dbReference type="GO" id="GO:0006424">
    <property type="term" value="P:glutamyl-tRNA aminoacylation"/>
    <property type="evidence" value="ECO:0007669"/>
    <property type="project" value="UniProtKB-UniRule"/>
</dbReference>
<dbReference type="CDD" id="cd00807">
    <property type="entry name" value="GlnRS_core"/>
    <property type="match status" value="1"/>
</dbReference>
<dbReference type="FunFam" id="3.40.50.620:FF:000037">
    <property type="entry name" value="Glutamine--tRNA ligase cytoplasmic"/>
    <property type="match status" value="1"/>
</dbReference>
<dbReference type="Gene3D" id="3.40.50.620">
    <property type="entry name" value="HUPs"/>
    <property type="match status" value="1"/>
</dbReference>
<dbReference type="Gene3D" id="2.40.240.10">
    <property type="entry name" value="Ribosomal Protein L25, Chain P"/>
    <property type="match status" value="2"/>
</dbReference>
<dbReference type="HAMAP" id="MF_00126">
    <property type="entry name" value="Gln_tRNA_synth"/>
    <property type="match status" value="1"/>
</dbReference>
<dbReference type="InterPro" id="IPR001412">
    <property type="entry name" value="aa-tRNA-synth_I_CS"/>
</dbReference>
<dbReference type="InterPro" id="IPR004514">
    <property type="entry name" value="Gln-tRNA-synth"/>
</dbReference>
<dbReference type="InterPro" id="IPR050132">
    <property type="entry name" value="Gln/Glu-tRNA_Ligase"/>
</dbReference>
<dbReference type="InterPro" id="IPR022861">
    <property type="entry name" value="Gln_tRNA_ligase_bac"/>
</dbReference>
<dbReference type="InterPro" id="IPR000924">
    <property type="entry name" value="Glu/Gln-tRNA-synth"/>
</dbReference>
<dbReference type="InterPro" id="IPR020058">
    <property type="entry name" value="Glu/Gln-tRNA-synth_Ib_cat-dom"/>
</dbReference>
<dbReference type="InterPro" id="IPR020059">
    <property type="entry name" value="Glu/Gln-tRNA-synth_Ib_codon-bd"/>
</dbReference>
<dbReference type="InterPro" id="IPR020056">
    <property type="entry name" value="Rbsml_bL25/Gln-tRNA_synth_N"/>
</dbReference>
<dbReference type="InterPro" id="IPR011035">
    <property type="entry name" value="Ribosomal_bL25/Gln-tRNA_synth"/>
</dbReference>
<dbReference type="InterPro" id="IPR014729">
    <property type="entry name" value="Rossmann-like_a/b/a_fold"/>
</dbReference>
<dbReference type="InterPro" id="IPR049437">
    <property type="entry name" value="tRNA-synt_1c_C2"/>
</dbReference>
<dbReference type="NCBIfam" id="TIGR00440">
    <property type="entry name" value="glnS"/>
    <property type="match status" value="1"/>
</dbReference>
<dbReference type="NCBIfam" id="NF011291">
    <property type="entry name" value="PRK14703.1"/>
    <property type="match status" value="1"/>
</dbReference>
<dbReference type="PANTHER" id="PTHR43097:SF5">
    <property type="entry name" value="GLUTAMATE--TRNA LIGASE"/>
    <property type="match status" value="1"/>
</dbReference>
<dbReference type="PANTHER" id="PTHR43097">
    <property type="entry name" value="GLUTAMINE-TRNA LIGASE"/>
    <property type="match status" value="1"/>
</dbReference>
<dbReference type="Pfam" id="PF00749">
    <property type="entry name" value="tRNA-synt_1c"/>
    <property type="match status" value="1"/>
</dbReference>
<dbReference type="Pfam" id="PF03950">
    <property type="entry name" value="tRNA-synt_1c_C"/>
    <property type="match status" value="1"/>
</dbReference>
<dbReference type="Pfam" id="PF20974">
    <property type="entry name" value="tRNA-synt_1c_C2"/>
    <property type="match status" value="1"/>
</dbReference>
<dbReference type="PRINTS" id="PR00987">
    <property type="entry name" value="TRNASYNTHGLU"/>
</dbReference>
<dbReference type="SUPFAM" id="SSF52374">
    <property type="entry name" value="Nucleotidylyl transferase"/>
    <property type="match status" value="1"/>
</dbReference>
<dbReference type="SUPFAM" id="SSF50715">
    <property type="entry name" value="Ribosomal protein L25-like"/>
    <property type="match status" value="1"/>
</dbReference>
<dbReference type="PROSITE" id="PS00178">
    <property type="entry name" value="AA_TRNA_LIGASE_I"/>
    <property type="match status" value="1"/>
</dbReference>
<protein>
    <recommendedName>
        <fullName evidence="1">Glutamine--tRNA ligase</fullName>
        <ecNumber evidence="1">6.1.1.18</ecNumber>
    </recommendedName>
    <alternativeName>
        <fullName evidence="1">Glutaminyl-tRNA synthetase</fullName>
        <shortName evidence="1">GlnRS</shortName>
    </alternativeName>
</protein>
<proteinExistence type="inferred from homology"/>
<organism>
    <name type="scientific">Cupriavidus metallidurans (strain ATCC 43123 / DSM 2839 / NBRC 102507 / CH34)</name>
    <name type="common">Ralstonia metallidurans</name>
    <dbReference type="NCBI Taxonomy" id="266264"/>
    <lineage>
        <taxon>Bacteria</taxon>
        <taxon>Pseudomonadati</taxon>
        <taxon>Pseudomonadota</taxon>
        <taxon>Betaproteobacteria</taxon>
        <taxon>Burkholderiales</taxon>
        <taxon>Burkholderiaceae</taxon>
        <taxon>Cupriavidus</taxon>
    </lineage>
</organism>
<feature type="chain" id="PRO_1000095506" description="Glutamine--tRNA ligase">
    <location>
        <begin position="1"/>
        <end position="582"/>
    </location>
</feature>
<feature type="short sequence motif" description="'HIGH' region" evidence="1">
    <location>
        <begin position="50"/>
        <end position="60"/>
    </location>
</feature>
<feature type="short sequence motif" description="'KMSKS' region" evidence="1">
    <location>
        <begin position="296"/>
        <end position="300"/>
    </location>
</feature>
<feature type="binding site" evidence="1">
    <location>
        <begin position="51"/>
        <end position="53"/>
    </location>
    <ligand>
        <name>ATP</name>
        <dbReference type="ChEBI" id="CHEBI:30616"/>
    </ligand>
</feature>
<feature type="binding site" evidence="1">
    <location>
        <begin position="57"/>
        <end position="63"/>
    </location>
    <ligand>
        <name>ATP</name>
        <dbReference type="ChEBI" id="CHEBI:30616"/>
    </ligand>
</feature>
<feature type="binding site" evidence="1">
    <location>
        <position position="83"/>
    </location>
    <ligand>
        <name>L-glutamine</name>
        <dbReference type="ChEBI" id="CHEBI:58359"/>
    </ligand>
</feature>
<feature type="binding site" evidence="1">
    <location>
        <position position="235"/>
    </location>
    <ligand>
        <name>L-glutamine</name>
        <dbReference type="ChEBI" id="CHEBI:58359"/>
    </ligand>
</feature>
<feature type="binding site" evidence="1">
    <location>
        <position position="254"/>
    </location>
    <ligand>
        <name>ATP</name>
        <dbReference type="ChEBI" id="CHEBI:30616"/>
    </ligand>
</feature>
<feature type="binding site" evidence="1">
    <location>
        <begin position="289"/>
        <end position="290"/>
    </location>
    <ligand>
        <name>ATP</name>
        <dbReference type="ChEBI" id="CHEBI:30616"/>
    </ligand>
</feature>
<keyword id="KW-0030">Aminoacyl-tRNA synthetase</keyword>
<keyword id="KW-0067">ATP-binding</keyword>
<keyword id="KW-0963">Cytoplasm</keyword>
<keyword id="KW-0436">Ligase</keyword>
<keyword id="KW-0547">Nucleotide-binding</keyword>
<keyword id="KW-0648">Protein biosynthesis</keyword>
<keyword id="KW-1185">Reference proteome</keyword>